<organism>
    <name type="scientific">Symbiobacterium thermophilum (strain DSM 24528 / JCM 14929 / IAM 14863 / T)</name>
    <dbReference type="NCBI Taxonomy" id="292459"/>
    <lineage>
        <taxon>Bacteria</taxon>
        <taxon>Bacillati</taxon>
        <taxon>Bacillota</taxon>
        <taxon>Clostridia</taxon>
        <taxon>Eubacteriales</taxon>
        <taxon>Symbiobacteriaceae</taxon>
        <taxon>Symbiobacterium</taxon>
    </lineage>
</organism>
<sequence length="293" mass="30825">MDQQALDKAAVLAEALPYIREFSGKTVVIKYGGAAMAAADLKAAVMQDIALMKYVGMHPIVVHGGGPEVSELARRMGIEPQFVDGLRVTDAATMEIAQMVLVGKTNREIVTHLCAQGVKAVGLSGQDAGLIRAARHLHRSRETGEMVDLGFVGDVAAVDTEVLTTLTTAGYVPVIAPIGVGPGGQPYNINADTVAGAIAAAMKAEKLVLLTDVEGVRADKDDPSSLLSRVTAQEVKSWIARGRLQGGMIPKLQCCLTALEGGVNRVHIIDGRVPHSLLLEIFTDEGVGTMVVK</sequence>
<keyword id="KW-0028">Amino-acid biosynthesis</keyword>
<keyword id="KW-0055">Arginine biosynthesis</keyword>
<keyword id="KW-0067">ATP-binding</keyword>
<keyword id="KW-0963">Cytoplasm</keyword>
<keyword id="KW-0418">Kinase</keyword>
<keyword id="KW-0547">Nucleotide-binding</keyword>
<keyword id="KW-1185">Reference proteome</keyword>
<keyword id="KW-0808">Transferase</keyword>
<feature type="chain" id="PRO_0000112674" description="Acetylglutamate kinase">
    <location>
        <begin position="1"/>
        <end position="293"/>
    </location>
</feature>
<feature type="binding site" evidence="1">
    <location>
        <begin position="65"/>
        <end position="66"/>
    </location>
    <ligand>
        <name>substrate</name>
    </ligand>
</feature>
<feature type="binding site" evidence="1">
    <location>
        <position position="87"/>
    </location>
    <ligand>
        <name>substrate</name>
    </ligand>
</feature>
<feature type="binding site" evidence="1">
    <location>
        <position position="188"/>
    </location>
    <ligand>
        <name>substrate</name>
    </ligand>
</feature>
<feature type="site" description="Transition state stabilizer" evidence="1">
    <location>
        <position position="30"/>
    </location>
</feature>
<feature type="site" description="Transition state stabilizer" evidence="1">
    <location>
        <position position="251"/>
    </location>
</feature>
<accession>Q67KD3</accession>
<comment type="function">
    <text evidence="1">Catalyzes the ATP-dependent phosphorylation of N-acetyl-L-glutamate.</text>
</comment>
<comment type="catalytic activity">
    <reaction evidence="1">
        <text>N-acetyl-L-glutamate + ATP = N-acetyl-L-glutamyl 5-phosphate + ADP</text>
        <dbReference type="Rhea" id="RHEA:14629"/>
        <dbReference type="ChEBI" id="CHEBI:30616"/>
        <dbReference type="ChEBI" id="CHEBI:44337"/>
        <dbReference type="ChEBI" id="CHEBI:57936"/>
        <dbReference type="ChEBI" id="CHEBI:456216"/>
        <dbReference type="EC" id="2.7.2.8"/>
    </reaction>
</comment>
<comment type="pathway">
    <text evidence="1">Amino-acid biosynthesis; L-arginine biosynthesis; N(2)-acetyl-L-ornithine from L-glutamate: step 2/4.</text>
</comment>
<comment type="subcellular location">
    <subcellularLocation>
        <location evidence="1">Cytoplasm</location>
    </subcellularLocation>
</comment>
<comment type="similarity">
    <text evidence="1">Belongs to the acetylglutamate kinase family. ArgB subfamily.</text>
</comment>
<protein>
    <recommendedName>
        <fullName evidence="1">Acetylglutamate kinase</fullName>
        <ecNumber evidence="1">2.7.2.8</ecNumber>
    </recommendedName>
    <alternativeName>
        <fullName evidence="1">N-acetyl-L-glutamate 5-phosphotransferase</fullName>
    </alternativeName>
    <alternativeName>
        <fullName evidence="1">NAG kinase</fullName>
        <shortName evidence="1">NAGK</shortName>
    </alternativeName>
</protein>
<reference key="1">
    <citation type="journal article" date="2004" name="Nucleic Acids Res.">
        <title>Genome sequence of Symbiobacterium thermophilum, an uncultivable bacterium that depends on microbial commensalism.</title>
        <authorList>
            <person name="Ueda K."/>
            <person name="Yamashita A."/>
            <person name="Ishikawa J."/>
            <person name="Shimada M."/>
            <person name="Watsuji T."/>
            <person name="Morimura K."/>
            <person name="Ikeda H."/>
            <person name="Hattori M."/>
            <person name="Beppu T."/>
        </authorList>
    </citation>
    <scope>NUCLEOTIDE SEQUENCE [LARGE SCALE GENOMIC DNA]</scope>
    <source>
        <strain>DSM 24528 / JCM 14929 / IAM 14863 / T</strain>
    </source>
</reference>
<evidence type="ECO:0000255" key="1">
    <source>
        <dbReference type="HAMAP-Rule" id="MF_00082"/>
    </source>
</evidence>
<gene>
    <name evidence="1" type="primary">argB</name>
    <name type="ordered locus">STH2882</name>
</gene>
<proteinExistence type="inferred from homology"/>
<name>ARGB_SYMTH</name>
<dbReference type="EC" id="2.7.2.8" evidence="1"/>
<dbReference type="EMBL" id="AP006840">
    <property type="protein sequence ID" value="BAD41865.1"/>
    <property type="molecule type" value="Genomic_DNA"/>
</dbReference>
<dbReference type="RefSeq" id="WP_011196999.1">
    <property type="nucleotide sequence ID" value="NC_006177.1"/>
</dbReference>
<dbReference type="SMR" id="Q67KD3"/>
<dbReference type="STRING" id="292459.STH2882"/>
<dbReference type="KEGG" id="sth:STH2882"/>
<dbReference type="eggNOG" id="COG0548">
    <property type="taxonomic scope" value="Bacteria"/>
</dbReference>
<dbReference type="HOGENOM" id="CLU_053680_0_0_9"/>
<dbReference type="OrthoDB" id="9803155at2"/>
<dbReference type="UniPathway" id="UPA00068">
    <property type="reaction ID" value="UER00107"/>
</dbReference>
<dbReference type="Proteomes" id="UP000000417">
    <property type="component" value="Chromosome"/>
</dbReference>
<dbReference type="GO" id="GO:0005737">
    <property type="term" value="C:cytoplasm"/>
    <property type="evidence" value="ECO:0007669"/>
    <property type="project" value="UniProtKB-SubCell"/>
</dbReference>
<dbReference type="GO" id="GO:0003991">
    <property type="term" value="F:acetylglutamate kinase activity"/>
    <property type="evidence" value="ECO:0007669"/>
    <property type="project" value="UniProtKB-UniRule"/>
</dbReference>
<dbReference type="GO" id="GO:0005524">
    <property type="term" value="F:ATP binding"/>
    <property type="evidence" value="ECO:0007669"/>
    <property type="project" value="UniProtKB-UniRule"/>
</dbReference>
<dbReference type="GO" id="GO:0042450">
    <property type="term" value="P:arginine biosynthetic process via ornithine"/>
    <property type="evidence" value="ECO:0007669"/>
    <property type="project" value="UniProtKB-UniRule"/>
</dbReference>
<dbReference type="GO" id="GO:0006526">
    <property type="term" value="P:L-arginine biosynthetic process"/>
    <property type="evidence" value="ECO:0007669"/>
    <property type="project" value="UniProtKB-UniPathway"/>
</dbReference>
<dbReference type="CDD" id="cd04250">
    <property type="entry name" value="AAK_NAGK-C"/>
    <property type="match status" value="1"/>
</dbReference>
<dbReference type="FunFam" id="3.40.1160.10:FF:000004">
    <property type="entry name" value="Acetylglutamate kinase"/>
    <property type="match status" value="1"/>
</dbReference>
<dbReference type="Gene3D" id="3.40.1160.10">
    <property type="entry name" value="Acetylglutamate kinase-like"/>
    <property type="match status" value="1"/>
</dbReference>
<dbReference type="HAMAP" id="MF_00082">
    <property type="entry name" value="ArgB"/>
    <property type="match status" value="1"/>
</dbReference>
<dbReference type="InterPro" id="IPR036393">
    <property type="entry name" value="AceGlu_kinase-like_sf"/>
</dbReference>
<dbReference type="InterPro" id="IPR004662">
    <property type="entry name" value="AcgluKinase_fam"/>
</dbReference>
<dbReference type="InterPro" id="IPR037528">
    <property type="entry name" value="ArgB"/>
</dbReference>
<dbReference type="InterPro" id="IPR001048">
    <property type="entry name" value="Asp/Glu/Uridylate_kinase"/>
</dbReference>
<dbReference type="InterPro" id="IPR001057">
    <property type="entry name" value="Glu/AcGlu_kinase"/>
</dbReference>
<dbReference type="InterPro" id="IPR041727">
    <property type="entry name" value="NAGK-C"/>
</dbReference>
<dbReference type="NCBIfam" id="TIGR00761">
    <property type="entry name" value="argB"/>
    <property type="match status" value="1"/>
</dbReference>
<dbReference type="PANTHER" id="PTHR23342">
    <property type="entry name" value="N-ACETYLGLUTAMATE SYNTHASE"/>
    <property type="match status" value="1"/>
</dbReference>
<dbReference type="PANTHER" id="PTHR23342:SF0">
    <property type="entry name" value="N-ACETYLGLUTAMATE SYNTHASE, MITOCHONDRIAL"/>
    <property type="match status" value="1"/>
</dbReference>
<dbReference type="Pfam" id="PF00696">
    <property type="entry name" value="AA_kinase"/>
    <property type="match status" value="1"/>
</dbReference>
<dbReference type="PIRSF" id="PIRSF000728">
    <property type="entry name" value="NAGK"/>
    <property type="match status" value="1"/>
</dbReference>
<dbReference type="PRINTS" id="PR00474">
    <property type="entry name" value="GLU5KINASE"/>
</dbReference>
<dbReference type="SUPFAM" id="SSF53633">
    <property type="entry name" value="Carbamate kinase-like"/>
    <property type="match status" value="1"/>
</dbReference>